<comment type="function">
    <text evidence="1">Prevents the cell division inhibition by proteins MinC and MinD at internal division sites while permitting inhibition at polar sites. This ensures cell division at the proper site by restricting the formation of a division septum at the midpoint of the long axis of the cell.</text>
</comment>
<comment type="similarity">
    <text evidence="1">Belongs to the MinE family.</text>
</comment>
<name>MINE_BRUMB</name>
<protein>
    <recommendedName>
        <fullName evidence="1">Cell division topological specificity factor</fullName>
    </recommendedName>
</protein>
<proteinExistence type="inferred from homology"/>
<accession>C0RKP8</accession>
<feature type="chain" id="PRO_1000191268" description="Cell division topological specificity factor">
    <location>
        <begin position="1"/>
        <end position="90"/>
    </location>
</feature>
<organism>
    <name type="scientific">Brucella melitensis biotype 2 (strain ATCC 23457)</name>
    <dbReference type="NCBI Taxonomy" id="546272"/>
    <lineage>
        <taxon>Bacteria</taxon>
        <taxon>Pseudomonadati</taxon>
        <taxon>Pseudomonadota</taxon>
        <taxon>Alphaproteobacteria</taxon>
        <taxon>Hyphomicrobiales</taxon>
        <taxon>Brucellaceae</taxon>
        <taxon>Brucella/Ochrobactrum group</taxon>
        <taxon>Brucella</taxon>
    </lineage>
</organism>
<keyword id="KW-0131">Cell cycle</keyword>
<keyword id="KW-0132">Cell division</keyword>
<dbReference type="EMBL" id="CP001489">
    <property type="protein sequence ID" value="ACO02181.1"/>
    <property type="molecule type" value="Genomic_DNA"/>
</dbReference>
<dbReference type="RefSeq" id="WP_002966267.1">
    <property type="nucleotide sequence ID" value="NC_012442.1"/>
</dbReference>
<dbReference type="SMR" id="C0RKP8"/>
<dbReference type="GeneID" id="97535514"/>
<dbReference type="KEGG" id="bmi:BMEA_B0322"/>
<dbReference type="HOGENOM" id="CLU_137929_2_0_5"/>
<dbReference type="Proteomes" id="UP000001748">
    <property type="component" value="Chromosome II"/>
</dbReference>
<dbReference type="GO" id="GO:0051301">
    <property type="term" value="P:cell division"/>
    <property type="evidence" value="ECO:0007669"/>
    <property type="project" value="UniProtKB-KW"/>
</dbReference>
<dbReference type="GO" id="GO:0032955">
    <property type="term" value="P:regulation of division septum assembly"/>
    <property type="evidence" value="ECO:0007669"/>
    <property type="project" value="InterPro"/>
</dbReference>
<dbReference type="Gene3D" id="3.30.1070.10">
    <property type="entry name" value="Cell division topological specificity factor MinE"/>
    <property type="match status" value="1"/>
</dbReference>
<dbReference type="HAMAP" id="MF_00262">
    <property type="entry name" value="MinE"/>
    <property type="match status" value="1"/>
</dbReference>
<dbReference type="InterPro" id="IPR005527">
    <property type="entry name" value="MinE"/>
</dbReference>
<dbReference type="InterPro" id="IPR036707">
    <property type="entry name" value="MinE_sf"/>
</dbReference>
<dbReference type="NCBIfam" id="TIGR01215">
    <property type="entry name" value="minE"/>
    <property type="match status" value="1"/>
</dbReference>
<dbReference type="NCBIfam" id="NF001422">
    <property type="entry name" value="PRK00296.1"/>
    <property type="match status" value="1"/>
</dbReference>
<dbReference type="Pfam" id="PF03776">
    <property type="entry name" value="MinE"/>
    <property type="match status" value="1"/>
</dbReference>
<dbReference type="SUPFAM" id="SSF55229">
    <property type="entry name" value="Cell division protein MinE topological specificity domain"/>
    <property type="match status" value="1"/>
</dbReference>
<reference key="1">
    <citation type="submission" date="2009-03" db="EMBL/GenBank/DDBJ databases">
        <title>Brucella melitensis ATCC 23457 whole genome shotgun sequencing project.</title>
        <authorList>
            <person name="Setubal J.C."/>
            <person name="Boyle S."/>
            <person name="Crasta O.R."/>
            <person name="Gillespie J.J."/>
            <person name="Kenyon R.W."/>
            <person name="Lu J."/>
            <person name="Mane S."/>
            <person name="Nagrani S."/>
            <person name="Shallom J.M."/>
            <person name="Shallom S."/>
            <person name="Shukla M."/>
            <person name="Snyder E.E."/>
            <person name="Sobral B.W."/>
            <person name="Wattam A.R."/>
            <person name="Will R."/>
            <person name="Williams K."/>
            <person name="Yoo H."/>
            <person name="Munk C."/>
            <person name="Tapia R."/>
            <person name="Han C."/>
            <person name="Detter J.C."/>
            <person name="Bruce D."/>
            <person name="Brettin T.S."/>
        </authorList>
    </citation>
    <scope>NUCLEOTIDE SEQUENCE [LARGE SCALE GENOMIC DNA]</scope>
    <source>
        <strain>ATCC 23457</strain>
    </source>
</reference>
<sequence length="90" mass="10089">MSIFRFFTRQQASAPQARERLQVLLAHERASYGGQSDLVAVLREEILAVIAKHIKVDREKVSVKMDRGDQVSTLEVDIELPLTAKKGRAA</sequence>
<evidence type="ECO:0000255" key="1">
    <source>
        <dbReference type="HAMAP-Rule" id="MF_00262"/>
    </source>
</evidence>
<gene>
    <name evidence="1" type="primary">minE</name>
    <name type="ordered locus">BMEA_B0322</name>
</gene>